<reference key="1">
    <citation type="journal article" date="2003" name="Proc. Natl. Acad. Sci. U.S.A.">
        <title>The complete genome sequence of Chromobacterium violaceum reveals remarkable and exploitable bacterial adaptability.</title>
        <authorList>
            <person name="Vasconcelos A.T.R."/>
            <person name="de Almeida D.F."/>
            <person name="Hungria M."/>
            <person name="Guimaraes C.T."/>
            <person name="Antonio R.V."/>
            <person name="Almeida F.C."/>
            <person name="de Almeida L.G.P."/>
            <person name="de Almeida R."/>
            <person name="Alves-Gomes J.A."/>
            <person name="Andrade E.M."/>
            <person name="Araripe J."/>
            <person name="de Araujo M.F.F."/>
            <person name="Astolfi-Filho S."/>
            <person name="Azevedo V."/>
            <person name="Baptista A.J."/>
            <person name="Bataus L.A.M."/>
            <person name="Batista J.S."/>
            <person name="Belo A."/>
            <person name="van den Berg C."/>
            <person name="Bogo M."/>
            <person name="Bonatto S."/>
            <person name="Bordignon J."/>
            <person name="Brigido M.M."/>
            <person name="Brito C.A."/>
            <person name="Brocchi M."/>
            <person name="Burity H.A."/>
            <person name="Camargo A.A."/>
            <person name="Cardoso D.D.P."/>
            <person name="Carneiro N.P."/>
            <person name="Carraro D.M."/>
            <person name="Carvalho C.M.B."/>
            <person name="Cascardo J.C.M."/>
            <person name="Cavada B.S."/>
            <person name="Chueire L.M.O."/>
            <person name="Creczynski-Pasa T.B."/>
            <person name="Cunha-Junior N.C."/>
            <person name="Fagundes N."/>
            <person name="Falcao C.L."/>
            <person name="Fantinatti F."/>
            <person name="Farias I.P."/>
            <person name="Felipe M.S.S."/>
            <person name="Ferrari L.P."/>
            <person name="Ferro J.A."/>
            <person name="Ferro M.I.T."/>
            <person name="Franco G.R."/>
            <person name="Freitas N.S.A."/>
            <person name="Furlan L.R."/>
            <person name="Gazzinelli R.T."/>
            <person name="Gomes E.A."/>
            <person name="Goncalves P.R."/>
            <person name="Grangeiro T.B."/>
            <person name="Grattapaglia D."/>
            <person name="Grisard E.C."/>
            <person name="Hanna E.S."/>
            <person name="Jardim S.N."/>
            <person name="Laurino J."/>
            <person name="Leoi L.C.T."/>
            <person name="Lima L.F.A."/>
            <person name="Loureiro M.F."/>
            <person name="Lyra M.C.C.P."/>
            <person name="Madeira H.M.F."/>
            <person name="Manfio G.P."/>
            <person name="Maranhao A.Q."/>
            <person name="Martins W.S."/>
            <person name="di Mauro S.M.Z."/>
            <person name="de Medeiros S.R.B."/>
            <person name="Meissner R.V."/>
            <person name="Moreira M.A.M."/>
            <person name="Nascimento F.F."/>
            <person name="Nicolas M.F."/>
            <person name="Oliveira J.G."/>
            <person name="Oliveira S.C."/>
            <person name="Paixao R.F.C."/>
            <person name="Parente J.A."/>
            <person name="Pedrosa F.O."/>
            <person name="Pena S.D.J."/>
            <person name="Pereira J.O."/>
            <person name="Pereira M."/>
            <person name="Pinto L.S.R.C."/>
            <person name="Pinto L.S."/>
            <person name="Porto J.I.R."/>
            <person name="Potrich D.P."/>
            <person name="Ramalho-Neto C.E."/>
            <person name="Reis A.M.M."/>
            <person name="Rigo L.U."/>
            <person name="Rondinelli E."/>
            <person name="Santos E.B.P."/>
            <person name="Santos F.R."/>
            <person name="Schneider M.P.C."/>
            <person name="Seuanez H.N."/>
            <person name="Silva A.M.R."/>
            <person name="da Silva A.L.C."/>
            <person name="Silva D.W."/>
            <person name="Silva R."/>
            <person name="Simoes I.C."/>
            <person name="Simon D."/>
            <person name="Soares C.M.A."/>
            <person name="Soares R.B.A."/>
            <person name="Souza E.M."/>
            <person name="Souza K.R.L."/>
            <person name="Souza R.C."/>
            <person name="Steffens M.B.R."/>
            <person name="Steindel M."/>
            <person name="Teixeira S.R."/>
            <person name="Urmenyi T."/>
            <person name="Vettore A."/>
            <person name="Wassem R."/>
            <person name="Zaha A."/>
            <person name="Simpson A.J.G."/>
        </authorList>
    </citation>
    <scope>NUCLEOTIDE SEQUENCE [LARGE SCALE GENOMIC DNA]</scope>
    <source>
        <strain>ATCC 12472 / DSM 30191 / JCM 1249 / CCUG 213 / NBRC 12614 / NCIMB 9131 / NCTC 9757 / MK</strain>
    </source>
</reference>
<feature type="chain" id="PRO_0000095011" description="tRNA 5-methylaminomethyl-2-thiouridine biosynthesis bifunctional protein MnmC">
    <location>
        <begin position="1"/>
        <end position="660"/>
    </location>
</feature>
<feature type="region of interest" description="tRNA (mnm(5)s(2)U34)-methyltransferase">
    <location>
        <begin position="1"/>
        <end position="233"/>
    </location>
</feature>
<feature type="region of interest" description="FAD-dependent cmnm(5)s(2)U34 oxidoreductase">
    <location>
        <begin position="260"/>
        <end position="660"/>
    </location>
</feature>
<comment type="function">
    <text evidence="1">Catalyzes the last two steps in the biosynthesis of 5-methylaminomethyl-2-thiouridine (mnm(5)s(2)U) at the wobble position (U34) in tRNA. Catalyzes the FAD-dependent demodification of cmnm(5)s(2)U34 to nm(5)s(2)U34, followed by the transfer of a methyl group from S-adenosyl-L-methionine to nm(5)s(2)U34, to form mnm(5)s(2)U34.</text>
</comment>
<comment type="catalytic activity">
    <reaction evidence="1">
        <text>5-aminomethyl-2-thiouridine(34) in tRNA + S-adenosyl-L-methionine = 5-methylaminomethyl-2-thiouridine(34) in tRNA + S-adenosyl-L-homocysteine + H(+)</text>
        <dbReference type="Rhea" id="RHEA:19569"/>
        <dbReference type="Rhea" id="RHEA-COMP:10195"/>
        <dbReference type="Rhea" id="RHEA-COMP:10197"/>
        <dbReference type="ChEBI" id="CHEBI:15378"/>
        <dbReference type="ChEBI" id="CHEBI:57856"/>
        <dbReference type="ChEBI" id="CHEBI:59789"/>
        <dbReference type="ChEBI" id="CHEBI:74454"/>
        <dbReference type="ChEBI" id="CHEBI:74455"/>
        <dbReference type="EC" id="2.1.1.61"/>
    </reaction>
</comment>
<comment type="cofactor">
    <cofactor evidence="1">
        <name>FAD</name>
        <dbReference type="ChEBI" id="CHEBI:57692"/>
    </cofactor>
</comment>
<comment type="subcellular location">
    <subcellularLocation>
        <location evidence="1">Cytoplasm</location>
    </subcellularLocation>
</comment>
<comment type="similarity">
    <text evidence="1">In the N-terminal section; belongs to the methyltransferase superfamily. tRNA (mnm(5)s(2)U34)-methyltransferase family.</text>
</comment>
<comment type="similarity">
    <text evidence="1">In the C-terminal section; belongs to the DAO family.</text>
</comment>
<dbReference type="EC" id="2.1.1.61" evidence="1"/>
<dbReference type="EC" id="1.5.-.-" evidence="1"/>
<dbReference type="EMBL" id="AE016825">
    <property type="protein sequence ID" value="AAQ59616.1"/>
    <property type="molecule type" value="Genomic_DNA"/>
</dbReference>
<dbReference type="RefSeq" id="WP_011135493.1">
    <property type="nucleotide sequence ID" value="NC_005085.1"/>
</dbReference>
<dbReference type="SMR" id="Q7NWN9"/>
<dbReference type="STRING" id="243365.CV_1942"/>
<dbReference type="KEGG" id="cvi:CV_1942"/>
<dbReference type="eggNOG" id="COG0665">
    <property type="taxonomic scope" value="Bacteria"/>
</dbReference>
<dbReference type="eggNOG" id="COG4121">
    <property type="taxonomic scope" value="Bacteria"/>
</dbReference>
<dbReference type="HOGENOM" id="CLU_022427_1_0_4"/>
<dbReference type="OrthoDB" id="9786494at2"/>
<dbReference type="Proteomes" id="UP000001424">
    <property type="component" value="Chromosome"/>
</dbReference>
<dbReference type="GO" id="GO:0005737">
    <property type="term" value="C:cytoplasm"/>
    <property type="evidence" value="ECO:0007669"/>
    <property type="project" value="UniProtKB-SubCell"/>
</dbReference>
<dbReference type="GO" id="GO:0050660">
    <property type="term" value="F:flavin adenine dinucleotide binding"/>
    <property type="evidence" value="ECO:0007669"/>
    <property type="project" value="UniProtKB-UniRule"/>
</dbReference>
<dbReference type="GO" id="GO:0016645">
    <property type="term" value="F:oxidoreductase activity, acting on the CH-NH group of donors"/>
    <property type="evidence" value="ECO:0007669"/>
    <property type="project" value="InterPro"/>
</dbReference>
<dbReference type="GO" id="GO:0004808">
    <property type="term" value="F:tRNA (5-methylaminomethyl-2-thiouridylate)(34)-methyltransferase activity"/>
    <property type="evidence" value="ECO:0007669"/>
    <property type="project" value="UniProtKB-EC"/>
</dbReference>
<dbReference type="GO" id="GO:0032259">
    <property type="term" value="P:methylation"/>
    <property type="evidence" value="ECO:0007669"/>
    <property type="project" value="UniProtKB-KW"/>
</dbReference>
<dbReference type="GO" id="GO:0002098">
    <property type="term" value="P:tRNA wobble uridine modification"/>
    <property type="evidence" value="ECO:0007669"/>
    <property type="project" value="TreeGrafter"/>
</dbReference>
<dbReference type="Gene3D" id="3.30.9.10">
    <property type="entry name" value="D-Amino Acid Oxidase, subunit A, domain 2"/>
    <property type="match status" value="1"/>
</dbReference>
<dbReference type="Gene3D" id="3.50.50.60">
    <property type="entry name" value="FAD/NAD(P)-binding domain"/>
    <property type="match status" value="1"/>
</dbReference>
<dbReference type="Gene3D" id="3.40.50.150">
    <property type="entry name" value="Vaccinia Virus protein VP39"/>
    <property type="match status" value="1"/>
</dbReference>
<dbReference type="HAMAP" id="MF_01102">
    <property type="entry name" value="MnmC"/>
    <property type="match status" value="1"/>
</dbReference>
<dbReference type="InterPro" id="IPR006076">
    <property type="entry name" value="FAD-dep_OxRdtase"/>
</dbReference>
<dbReference type="InterPro" id="IPR036188">
    <property type="entry name" value="FAD/NAD-bd_sf"/>
</dbReference>
<dbReference type="InterPro" id="IPR008471">
    <property type="entry name" value="MnmC-like_methylTransf"/>
</dbReference>
<dbReference type="InterPro" id="IPR029063">
    <property type="entry name" value="SAM-dependent_MTases_sf"/>
</dbReference>
<dbReference type="InterPro" id="IPR023032">
    <property type="entry name" value="tRNA_MAMT_biosynth_bifunc_MnmC"/>
</dbReference>
<dbReference type="InterPro" id="IPR047785">
    <property type="entry name" value="tRNA_MNMC2"/>
</dbReference>
<dbReference type="InterPro" id="IPR017610">
    <property type="entry name" value="tRNA_S-uridine_synth_MnmC_C"/>
</dbReference>
<dbReference type="NCBIfam" id="TIGR03197">
    <property type="entry name" value="MnmC_Cterm"/>
    <property type="match status" value="1"/>
</dbReference>
<dbReference type="NCBIfam" id="NF002481">
    <property type="entry name" value="PRK01747.1-2"/>
    <property type="match status" value="1"/>
</dbReference>
<dbReference type="NCBIfam" id="NF033855">
    <property type="entry name" value="tRNA_MNMC2"/>
    <property type="match status" value="1"/>
</dbReference>
<dbReference type="PANTHER" id="PTHR13847">
    <property type="entry name" value="SARCOSINE DEHYDROGENASE-RELATED"/>
    <property type="match status" value="1"/>
</dbReference>
<dbReference type="PANTHER" id="PTHR13847:SF283">
    <property type="entry name" value="TRNA 5-METHYLAMINOMETHYL-2-THIOURIDINE BIOSYNTHESIS BIFUNCTIONAL PROTEIN MNMC"/>
    <property type="match status" value="1"/>
</dbReference>
<dbReference type="Pfam" id="PF01266">
    <property type="entry name" value="DAO"/>
    <property type="match status" value="1"/>
</dbReference>
<dbReference type="Pfam" id="PF05430">
    <property type="entry name" value="Methyltransf_30"/>
    <property type="match status" value="1"/>
</dbReference>
<dbReference type="SUPFAM" id="SSF54373">
    <property type="entry name" value="FAD-linked reductases, C-terminal domain"/>
    <property type="match status" value="1"/>
</dbReference>
<dbReference type="SUPFAM" id="SSF51905">
    <property type="entry name" value="FAD/NAD(P)-binding domain"/>
    <property type="match status" value="1"/>
</dbReference>
<dbReference type="SUPFAM" id="SSF53335">
    <property type="entry name" value="S-adenosyl-L-methionine-dependent methyltransferases"/>
    <property type="match status" value="1"/>
</dbReference>
<proteinExistence type="inferred from homology"/>
<organism>
    <name type="scientific">Chromobacterium violaceum (strain ATCC 12472 / DSM 30191 / JCM 1249 / CCUG 213 / NBRC 12614 / NCIMB 9131 / NCTC 9757 / MK)</name>
    <dbReference type="NCBI Taxonomy" id="243365"/>
    <lineage>
        <taxon>Bacteria</taxon>
        <taxon>Pseudomonadati</taxon>
        <taxon>Pseudomonadota</taxon>
        <taxon>Betaproteobacteria</taxon>
        <taxon>Neisseriales</taxon>
        <taxon>Chromobacteriaceae</taxon>
        <taxon>Chromobacterium</taxon>
    </lineage>
</organism>
<protein>
    <recommendedName>
        <fullName evidence="1">tRNA 5-methylaminomethyl-2-thiouridine biosynthesis bifunctional protein MnmC</fullName>
        <shortName evidence="1">tRNA mnm(5)s(2)U biosynthesis bifunctional protein</shortName>
    </recommendedName>
    <domain>
        <recommendedName>
            <fullName evidence="1">tRNA (mnm(5)s(2)U34)-methyltransferase</fullName>
            <ecNumber evidence="1">2.1.1.61</ecNumber>
        </recommendedName>
    </domain>
    <domain>
        <recommendedName>
            <fullName evidence="1">FAD-dependent cmnm(5)s(2)U34 oxidoreductase</fullName>
            <ecNumber evidence="1">1.5.-.-</ecNumber>
        </recommendedName>
    </domain>
</protein>
<keyword id="KW-0963">Cytoplasm</keyword>
<keyword id="KW-0274">FAD</keyword>
<keyword id="KW-0285">Flavoprotein</keyword>
<keyword id="KW-0489">Methyltransferase</keyword>
<keyword id="KW-0511">Multifunctional enzyme</keyword>
<keyword id="KW-0560">Oxidoreductase</keyword>
<keyword id="KW-1185">Reference proteome</keyword>
<keyword id="KW-0949">S-adenosyl-L-methionine</keyword>
<keyword id="KW-0808">Transferase</keyword>
<keyword id="KW-0819">tRNA processing</keyword>
<evidence type="ECO:0000255" key="1">
    <source>
        <dbReference type="HAMAP-Rule" id="MF_01102"/>
    </source>
</evidence>
<accession>Q7NWN9</accession>
<sequence>MTHSHAQLVWQDGQPMSAVFGDVYFSRASGLEETRHVFLRHNQLEERFAALPPSGSFAIAETGFGTGLNFLCAWQCFEARAPAGARLHFVSAEKFPLTPSDLAQALALWPELEPWSSQLLAQYDVLTPGWHRFVLAGGRVTLTLMIGDVLEVLPQLDARVDAWFLDGFAPSKNPDMWQQALFEQMARLSGPGASFATFTSAGAVRRGLAGAGFEVRKAPGHGAKRHISHGWIATPPDAGWQAPWYARPEPRWRERSAIVVGGGLAGAASARSLALRGWQVTLIERMPQLASAASGNPQGVLYTKLSPHLTPLTRLVLSGYAYSLRALRCLLPEDGDWQACGVLQLAHDGKEAEKQQALAELNLPESVMRPLDRDAASELAGTDLPCGGLFFPQGGWVHPPALVRQLADHPNIVIKTGRTALTLDYDPAQRSWTAGDEQGPLAVASVVVLAGAAETAQFDSTRHLPLKKIRGQITSIPASEESSRLRTVLCGEGYISPARGGRHCLGATFKFDTDDLGVNDGEHAENLAMLAELAPSLRASLDRDAPEHLDGRAAFRCTSPDYLPLVGPAVAARDFVHAYRELARDATLRPATACPWAEGLYVNAAHGSRGLITAPLSGEILASLLEGEPAPLPADLMRAVHPSRFLLRDLIRRKLDPDAL</sequence>
<name>MNMC_CHRVO</name>
<gene>
    <name evidence="1" type="primary">mnmC</name>
    <name type="ordered locus">CV_1942</name>
</gene>